<reference key="1">
    <citation type="journal article" date="1997" name="Nature">
        <title>The complete genome sequence of the Gram-positive bacterium Bacillus subtilis.</title>
        <authorList>
            <person name="Kunst F."/>
            <person name="Ogasawara N."/>
            <person name="Moszer I."/>
            <person name="Albertini A.M."/>
            <person name="Alloni G."/>
            <person name="Azevedo V."/>
            <person name="Bertero M.G."/>
            <person name="Bessieres P."/>
            <person name="Bolotin A."/>
            <person name="Borchert S."/>
            <person name="Borriss R."/>
            <person name="Boursier L."/>
            <person name="Brans A."/>
            <person name="Braun M."/>
            <person name="Brignell S.C."/>
            <person name="Bron S."/>
            <person name="Brouillet S."/>
            <person name="Bruschi C.V."/>
            <person name="Caldwell B."/>
            <person name="Capuano V."/>
            <person name="Carter N.M."/>
            <person name="Choi S.-K."/>
            <person name="Codani J.-J."/>
            <person name="Connerton I.F."/>
            <person name="Cummings N.J."/>
            <person name="Daniel R.A."/>
            <person name="Denizot F."/>
            <person name="Devine K.M."/>
            <person name="Duesterhoeft A."/>
            <person name="Ehrlich S.D."/>
            <person name="Emmerson P.T."/>
            <person name="Entian K.-D."/>
            <person name="Errington J."/>
            <person name="Fabret C."/>
            <person name="Ferrari E."/>
            <person name="Foulger D."/>
            <person name="Fritz C."/>
            <person name="Fujita M."/>
            <person name="Fujita Y."/>
            <person name="Fuma S."/>
            <person name="Galizzi A."/>
            <person name="Galleron N."/>
            <person name="Ghim S.-Y."/>
            <person name="Glaser P."/>
            <person name="Goffeau A."/>
            <person name="Golightly E.J."/>
            <person name="Grandi G."/>
            <person name="Guiseppi G."/>
            <person name="Guy B.J."/>
            <person name="Haga K."/>
            <person name="Haiech J."/>
            <person name="Harwood C.R."/>
            <person name="Henaut A."/>
            <person name="Hilbert H."/>
            <person name="Holsappel S."/>
            <person name="Hosono S."/>
            <person name="Hullo M.-F."/>
            <person name="Itaya M."/>
            <person name="Jones L.-M."/>
            <person name="Joris B."/>
            <person name="Karamata D."/>
            <person name="Kasahara Y."/>
            <person name="Klaerr-Blanchard M."/>
            <person name="Klein C."/>
            <person name="Kobayashi Y."/>
            <person name="Koetter P."/>
            <person name="Koningstein G."/>
            <person name="Krogh S."/>
            <person name="Kumano M."/>
            <person name="Kurita K."/>
            <person name="Lapidus A."/>
            <person name="Lardinois S."/>
            <person name="Lauber J."/>
            <person name="Lazarevic V."/>
            <person name="Lee S.-M."/>
            <person name="Levine A."/>
            <person name="Liu H."/>
            <person name="Masuda S."/>
            <person name="Mauel C."/>
            <person name="Medigue C."/>
            <person name="Medina N."/>
            <person name="Mellado R.P."/>
            <person name="Mizuno M."/>
            <person name="Moestl D."/>
            <person name="Nakai S."/>
            <person name="Noback M."/>
            <person name="Noone D."/>
            <person name="O'Reilly M."/>
            <person name="Ogawa K."/>
            <person name="Ogiwara A."/>
            <person name="Oudega B."/>
            <person name="Park S.-H."/>
            <person name="Parro V."/>
            <person name="Pohl T.M."/>
            <person name="Portetelle D."/>
            <person name="Porwollik S."/>
            <person name="Prescott A.M."/>
            <person name="Presecan E."/>
            <person name="Pujic P."/>
            <person name="Purnelle B."/>
            <person name="Rapoport G."/>
            <person name="Rey M."/>
            <person name="Reynolds S."/>
            <person name="Rieger M."/>
            <person name="Rivolta C."/>
            <person name="Rocha E."/>
            <person name="Roche B."/>
            <person name="Rose M."/>
            <person name="Sadaie Y."/>
            <person name="Sato T."/>
            <person name="Scanlan E."/>
            <person name="Schleich S."/>
            <person name="Schroeter R."/>
            <person name="Scoffone F."/>
            <person name="Sekiguchi J."/>
            <person name="Sekowska A."/>
            <person name="Seror S.J."/>
            <person name="Serror P."/>
            <person name="Shin B.-S."/>
            <person name="Soldo B."/>
            <person name="Sorokin A."/>
            <person name="Tacconi E."/>
            <person name="Takagi T."/>
            <person name="Takahashi H."/>
            <person name="Takemaru K."/>
            <person name="Takeuchi M."/>
            <person name="Tamakoshi A."/>
            <person name="Tanaka T."/>
            <person name="Terpstra P."/>
            <person name="Tognoni A."/>
            <person name="Tosato V."/>
            <person name="Uchiyama S."/>
            <person name="Vandenbol M."/>
            <person name="Vannier F."/>
            <person name="Vassarotti A."/>
            <person name="Viari A."/>
            <person name="Wambutt R."/>
            <person name="Wedler E."/>
            <person name="Wedler H."/>
            <person name="Weitzenegger T."/>
            <person name="Winters P."/>
            <person name="Wipat A."/>
            <person name="Yamamoto H."/>
            <person name="Yamane K."/>
            <person name="Yasumoto K."/>
            <person name="Yata K."/>
            <person name="Yoshida K."/>
            <person name="Yoshikawa H.-F."/>
            <person name="Zumstein E."/>
            <person name="Yoshikawa H."/>
            <person name="Danchin A."/>
        </authorList>
    </citation>
    <scope>NUCLEOTIDE SEQUENCE [LARGE SCALE GENOMIC DNA]</scope>
    <source>
        <strain>168</strain>
    </source>
</reference>
<keyword id="KW-1185">Reference proteome</keyword>
<accession>O31921</accession>
<proteinExistence type="predicted"/>
<sequence length="118" mass="13487">MKKRNQYSITVDVNGGEYNQEFVILADSLSKVGRDKIIADGVTIQFNDQILELNSNKEDSNDYYKGQTLTVKEDCLNNFWKGGTVTVEDVDIHRGILIDGVVYLEKQVVDKYFSKEEE</sequence>
<feature type="chain" id="PRO_0000360474" description="SPbeta prophage-derived uncharacterized protein YoqR">
    <location>
        <begin position="1"/>
        <end position="118"/>
    </location>
</feature>
<protein>
    <recommendedName>
        <fullName>SPbeta prophage-derived uncharacterized protein YoqR</fullName>
    </recommendedName>
</protein>
<organism>
    <name type="scientific">Bacillus subtilis (strain 168)</name>
    <dbReference type="NCBI Taxonomy" id="224308"/>
    <lineage>
        <taxon>Bacteria</taxon>
        <taxon>Bacillati</taxon>
        <taxon>Bacillota</taxon>
        <taxon>Bacilli</taxon>
        <taxon>Bacillales</taxon>
        <taxon>Bacillaceae</taxon>
        <taxon>Bacillus</taxon>
    </lineage>
</organism>
<name>YOQR_BACSU</name>
<gene>
    <name type="primary">yoqR</name>
    <name type="ordered locus">BSU20540</name>
</gene>
<dbReference type="EMBL" id="AL009126">
    <property type="protein sequence ID" value="CAB13946.1"/>
    <property type="molecule type" value="Genomic_DNA"/>
</dbReference>
<dbReference type="RefSeq" id="NP_389936.1">
    <property type="nucleotide sequence ID" value="NC_000964.3"/>
</dbReference>
<dbReference type="RefSeq" id="WP_009967487.1">
    <property type="nucleotide sequence ID" value="NZ_OZ025638.1"/>
</dbReference>
<dbReference type="FunCoup" id="O31921">
    <property type="interactions" value="53"/>
</dbReference>
<dbReference type="STRING" id="224308.BSU20540"/>
<dbReference type="PaxDb" id="224308-BSU20540"/>
<dbReference type="EnsemblBacteria" id="CAB13946">
    <property type="protein sequence ID" value="CAB13946"/>
    <property type="gene ID" value="BSU_20540"/>
</dbReference>
<dbReference type="GeneID" id="939440"/>
<dbReference type="KEGG" id="bsu:BSU20540"/>
<dbReference type="PATRIC" id="fig|224308.179.peg.2244"/>
<dbReference type="InParanoid" id="O31921"/>
<dbReference type="OrthoDB" id="2895130at2"/>
<dbReference type="BioCyc" id="BSUB:BSU20540-MONOMER"/>
<dbReference type="Proteomes" id="UP000001570">
    <property type="component" value="Chromosome"/>
</dbReference>